<name>Y2332_CITK8</name>
<proteinExistence type="inferred from homology"/>
<organism>
    <name type="scientific">Citrobacter koseri (strain ATCC BAA-895 / CDC 4225-83 / SGSC4696)</name>
    <dbReference type="NCBI Taxonomy" id="290338"/>
    <lineage>
        <taxon>Bacteria</taxon>
        <taxon>Pseudomonadati</taxon>
        <taxon>Pseudomonadota</taxon>
        <taxon>Gammaproteobacteria</taxon>
        <taxon>Enterobacterales</taxon>
        <taxon>Enterobacteriaceae</taxon>
        <taxon>Citrobacter</taxon>
    </lineage>
</organism>
<sequence length="331" mass="36137">MKKPVVIALAVAALAAVLAGGTWWYQSRQDNGLTLYGNVDIRTVNMSFRVGGRLASLAVDEGDAITSGQVLGVLDKAPYENALMQAKAGVSVAQAQYDLMLAGYRDEEIAQAAAAVKQAQAAFDYAQNFYQRQQGLWKSRTISANDLENARSSRDQAQAQLKSAQDKLSQYRTGNRQQDIAQAKASLEQAQAQLAQSELDLQDTTLIAPSDGTLLTRAVEPGSMLNAGSTVLTLSLTRPVWVRAYVDERNLSQAQPGREILLYTDGRPDKPYHGKIGFVSPTAEFTPKTVETPDLRTDLVYRLRIVVTDADDALRQGMPVTLTFSDEARHE</sequence>
<comment type="subcellular location">
    <subcellularLocation>
        <location evidence="1">Periplasm</location>
    </subcellularLocation>
</comment>
<comment type="similarity">
    <text evidence="1">Belongs to the UPF0194 family.</text>
</comment>
<dbReference type="EMBL" id="CP000822">
    <property type="protein sequence ID" value="ABV13454.1"/>
    <property type="molecule type" value="Genomic_DNA"/>
</dbReference>
<dbReference type="SMR" id="A8AIZ1"/>
<dbReference type="STRING" id="290338.CKO_02332"/>
<dbReference type="GeneID" id="45136237"/>
<dbReference type="KEGG" id="cko:CKO_02332"/>
<dbReference type="HOGENOM" id="CLU_018816_6_3_6"/>
<dbReference type="OrthoDB" id="9813967at2"/>
<dbReference type="Proteomes" id="UP000008148">
    <property type="component" value="Chromosome"/>
</dbReference>
<dbReference type="GO" id="GO:0042597">
    <property type="term" value="C:periplasmic space"/>
    <property type="evidence" value="ECO:0007669"/>
    <property type="project" value="UniProtKB-SubCell"/>
</dbReference>
<dbReference type="FunFam" id="1.10.287.470:FF:000004">
    <property type="entry name" value="UPF0194 membrane protein YbhG"/>
    <property type="match status" value="1"/>
</dbReference>
<dbReference type="Gene3D" id="2.40.30.170">
    <property type="match status" value="1"/>
</dbReference>
<dbReference type="Gene3D" id="2.40.50.100">
    <property type="match status" value="1"/>
</dbReference>
<dbReference type="Gene3D" id="1.10.287.470">
    <property type="entry name" value="Helix hairpin bin"/>
    <property type="match status" value="1"/>
</dbReference>
<dbReference type="HAMAP" id="MF_01304">
    <property type="entry name" value="UPF0194"/>
    <property type="match status" value="1"/>
</dbReference>
<dbReference type="InterPro" id="IPR032317">
    <property type="entry name" value="CusB_D23"/>
</dbReference>
<dbReference type="InterPro" id="IPR022936">
    <property type="entry name" value="UPF0194_membrane_YbhG"/>
</dbReference>
<dbReference type="InterPro" id="IPR050465">
    <property type="entry name" value="UPF0194_transport"/>
</dbReference>
<dbReference type="NCBIfam" id="NF002939">
    <property type="entry name" value="PRK03598.1"/>
    <property type="match status" value="1"/>
</dbReference>
<dbReference type="PANTHER" id="PTHR32347">
    <property type="entry name" value="EFFLUX SYSTEM COMPONENT YKNX-RELATED"/>
    <property type="match status" value="1"/>
</dbReference>
<dbReference type="PANTHER" id="PTHR32347:SF29">
    <property type="entry name" value="UPF0194 MEMBRANE PROTEIN YBHG"/>
    <property type="match status" value="1"/>
</dbReference>
<dbReference type="Pfam" id="PF16576">
    <property type="entry name" value="HlyD_D23"/>
    <property type="match status" value="1"/>
</dbReference>
<dbReference type="SUPFAM" id="SSF111369">
    <property type="entry name" value="HlyD-like secretion proteins"/>
    <property type="match status" value="3"/>
</dbReference>
<accession>A8AIZ1</accession>
<gene>
    <name type="ordered locus">CKO_02332</name>
</gene>
<feature type="signal peptide" evidence="1">
    <location>
        <begin position="1"/>
        <end position="15"/>
    </location>
</feature>
<feature type="chain" id="PRO_1000051808" description="UPF0194 membrane protein CKO_02332">
    <location>
        <begin position="16"/>
        <end position="331"/>
    </location>
</feature>
<feature type="coiled-coil region" evidence="1">
    <location>
        <begin position="142"/>
        <end position="207"/>
    </location>
</feature>
<keyword id="KW-0175">Coiled coil</keyword>
<keyword id="KW-0574">Periplasm</keyword>
<keyword id="KW-1185">Reference proteome</keyword>
<keyword id="KW-0732">Signal</keyword>
<protein>
    <recommendedName>
        <fullName evidence="1">UPF0194 membrane protein CKO_02332</fullName>
    </recommendedName>
</protein>
<evidence type="ECO:0000255" key="1">
    <source>
        <dbReference type="HAMAP-Rule" id="MF_01304"/>
    </source>
</evidence>
<reference key="1">
    <citation type="submission" date="2007-08" db="EMBL/GenBank/DDBJ databases">
        <authorList>
            <consortium name="The Citrobacter koseri Genome Sequencing Project"/>
            <person name="McClelland M."/>
            <person name="Sanderson E.K."/>
            <person name="Porwollik S."/>
            <person name="Spieth J."/>
            <person name="Clifton W.S."/>
            <person name="Latreille P."/>
            <person name="Courtney L."/>
            <person name="Wang C."/>
            <person name="Pepin K."/>
            <person name="Bhonagiri V."/>
            <person name="Nash W."/>
            <person name="Johnson M."/>
            <person name="Thiruvilangam P."/>
            <person name="Wilson R."/>
        </authorList>
    </citation>
    <scope>NUCLEOTIDE SEQUENCE [LARGE SCALE GENOMIC DNA]</scope>
    <source>
        <strain>ATCC BAA-895 / CDC 4225-83 / SGSC4696</strain>
    </source>
</reference>